<reference key="1">
    <citation type="journal article" date="2007" name="ISME J.">
        <title>Population level functional diversity in a microbial community revealed by comparative genomic and metagenomic analyses.</title>
        <authorList>
            <person name="Bhaya D."/>
            <person name="Grossman A.R."/>
            <person name="Steunou A.-S."/>
            <person name="Khuri N."/>
            <person name="Cohan F.M."/>
            <person name="Hamamura N."/>
            <person name="Melendrez M.C."/>
            <person name="Bateson M.M."/>
            <person name="Ward D.M."/>
            <person name="Heidelberg J.F."/>
        </authorList>
    </citation>
    <scope>NUCLEOTIDE SEQUENCE [LARGE SCALE GENOMIC DNA]</scope>
    <source>
        <strain>JA-3-3Ab</strain>
    </source>
</reference>
<organism>
    <name type="scientific">Synechococcus sp. (strain JA-3-3Ab)</name>
    <name type="common">Cyanobacteria bacterium Yellowstone A-Prime</name>
    <dbReference type="NCBI Taxonomy" id="321327"/>
    <lineage>
        <taxon>Bacteria</taxon>
        <taxon>Bacillati</taxon>
        <taxon>Cyanobacteriota</taxon>
        <taxon>Cyanophyceae</taxon>
        <taxon>Synechococcales</taxon>
        <taxon>Synechococcaceae</taxon>
        <taxon>Synechococcus</taxon>
    </lineage>
</organism>
<evidence type="ECO:0000255" key="1">
    <source>
        <dbReference type="HAMAP-Rule" id="MF_00075"/>
    </source>
</evidence>
<accession>Q2JV98</accession>
<gene>
    <name evidence="1" type="primary">infA</name>
    <name type="ordered locus">CYA_1157</name>
</gene>
<comment type="function">
    <text evidence="1">One of the essential components for the initiation of protein synthesis. Stabilizes the binding of IF-2 and IF-3 on the 30S subunit to which N-formylmethionyl-tRNA(fMet) subsequently binds. Helps modulate mRNA selection, yielding the 30S pre-initiation complex (PIC). Upon addition of the 50S ribosomal subunit IF-1, IF-2 and IF-3 are released leaving the mature 70S translation initiation complex.</text>
</comment>
<comment type="subunit">
    <text evidence="1">Component of the 30S ribosomal translation pre-initiation complex which assembles on the 30S ribosome in the order IF-2 and IF-3, IF-1 and N-formylmethionyl-tRNA(fMet); mRNA recruitment can occur at any time during PIC assembly.</text>
</comment>
<comment type="subcellular location">
    <subcellularLocation>
        <location evidence="1">Cytoplasm</location>
    </subcellularLocation>
</comment>
<comment type="similarity">
    <text evidence="1">Belongs to the IF-1 family.</text>
</comment>
<sequence length="74" mass="8461">MSKEDAIEVEGVVTESLPNAMFRVDLDNGFNVLAHISGKIRRNYIKILPGDRVKVELSPYDLNKGRITYRLKKK</sequence>
<keyword id="KW-0963">Cytoplasm</keyword>
<keyword id="KW-0396">Initiation factor</keyword>
<keyword id="KW-0648">Protein biosynthesis</keyword>
<keyword id="KW-0694">RNA-binding</keyword>
<keyword id="KW-0699">rRNA-binding</keyword>
<feature type="chain" id="PRO_0000263888" description="Translation initiation factor IF-1">
    <location>
        <begin position="1"/>
        <end position="74"/>
    </location>
</feature>
<feature type="domain" description="S1-like" evidence="1">
    <location>
        <begin position="1"/>
        <end position="72"/>
    </location>
</feature>
<dbReference type="EMBL" id="CP000239">
    <property type="protein sequence ID" value="ABC99345.1"/>
    <property type="molecule type" value="Genomic_DNA"/>
</dbReference>
<dbReference type="RefSeq" id="WP_011430026.1">
    <property type="nucleotide sequence ID" value="NC_007775.1"/>
</dbReference>
<dbReference type="SMR" id="Q2JV98"/>
<dbReference type="STRING" id="321327.CYA_1157"/>
<dbReference type="KEGG" id="cya:CYA_1157"/>
<dbReference type="eggNOG" id="COG0361">
    <property type="taxonomic scope" value="Bacteria"/>
</dbReference>
<dbReference type="HOGENOM" id="CLU_151267_1_0_3"/>
<dbReference type="OrthoDB" id="9803250at2"/>
<dbReference type="Proteomes" id="UP000008818">
    <property type="component" value="Chromosome"/>
</dbReference>
<dbReference type="GO" id="GO:0005829">
    <property type="term" value="C:cytosol"/>
    <property type="evidence" value="ECO:0007669"/>
    <property type="project" value="TreeGrafter"/>
</dbReference>
<dbReference type="GO" id="GO:0043022">
    <property type="term" value="F:ribosome binding"/>
    <property type="evidence" value="ECO:0007669"/>
    <property type="project" value="UniProtKB-UniRule"/>
</dbReference>
<dbReference type="GO" id="GO:0019843">
    <property type="term" value="F:rRNA binding"/>
    <property type="evidence" value="ECO:0007669"/>
    <property type="project" value="UniProtKB-UniRule"/>
</dbReference>
<dbReference type="GO" id="GO:0003743">
    <property type="term" value="F:translation initiation factor activity"/>
    <property type="evidence" value="ECO:0007669"/>
    <property type="project" value="UniProtKB-UniRule"/>
</dbReference>
<dbReference type="CDD" id="cd04451">
    <property type="entry name" value="S1_IF1"/>
    <property type="match status" value="1"/>
</dbReference>
<dbReference type="FunFam" id="2.40.50.140:FF:000002">
    <property type="entry name" value="Translation initiation factor IF-1"/>
    <property type="match status" value="1"/>
</dbReference>
<dbReference type="Gene3D" id="2.40.50.140">
    <property type="entry name" value="Nucleic acid-binding proteins"/>
    <property type="match status" value="1"/>
</dbReference>
<dbReference type="HAMAP" id="MF_00075">
    <property type="entry name" value="IF_1"/>
    <property type="match status" value="1"/>
</dbReference>
<dbReference type="InterPro" id="IPR012340">
    <property type="entry name" value="NA-bd_OB-fold"/>
</dbReference>
<dbReference type="InterPro" id="IPR006196">
    <property type="entry name" value="RNA-binding_domain_S1_IF1"/>
</dbReference>
<dbReference type="InterPro" id="IPR003029">
    <property type="entry name" value="S1_domain"/>
</dbReference>
<dbReference type="InterPro" id="IPR004368">
    <property type="entry name" value="TIF_IF1"/>
</dbReference>
<dbReference type="NCBIfam" id="TIGR00008">
    <property type="entry name" value="infA"/>
    <property type="match status" value="1"/>
</dbReference>
<dbReference type="PANTHER" id="PTHR33370">
    <property type="entry name" value="TRANSLATION INITIATION FACTOR IF-1, CHLOROPLASTIC"/>
    <property type="match status" value="1"/>
</dbReference>
<dbReference type="PANTHER" id="PTHR33370:SF1">
    <property type="entry name" value="TRANSLATION INITIATION FACTOR IF-1, CHLOROPLASTIC"/>
    <property type="match status" value="1"/>
</dbReference>
<dbReference type="Pfam" id="PF01176">
    <property type="entry name" value="eIF-1a"/>
    <property type="match status" value="1"/>
</dbReference>
<dbReference type="SMART" id="SM00316">
    <property type="entry name" value="S1"/>
    <property type="match status" value="1"/>
</dbReference>
<dbReference type="SUPFAM" id="SSF50249">
    <property type="entry name" value="Nucleic acid-binding proteins"/>
    <property type="match status" value="1"/>
</dbReference>
<dbReference type="PROSITE" id="PS50832">
    <property type="entry name" value="S1_IF1_TYPE"/>
    <property type="match status" value="1"/>
</dbReference>
<protein>
    <recommendedName>
        <fullName evidence="1">Translation initiation factor IF-1</fullName>
    </recommendedName>
</protein>
<proteinExistence type="inferred from homology"/>
<name>IF1_SYNJA</name>